<dbReference type="EMBL" id="M74801">
    <property type="protein sequence ID" value="AAA27292.1"/>
    <property type="molecule type" value="Genomic_DNA"/>
</dbReference>
<dbReference type="EMBL" id="L20938">
    <property type="protein sequence ID" value="AAA27294.1"/>
    <property type="molecule type" value="Genomic_DNA"/>
</dbReference>
<dbReference type="EMBL" id="BA000022">
    <property type="protein sequence ID" value="BAA18108.1"/>
    <property type="molecule type" value="Genomic_DNA"/>
</dbReference>
<dbReference type="PIR" id="A41072">
    <property type="entry name" value="A41072"/>
</dbReference>
<dbReference type="PDB" id="4KT0">
    <property type="method" value="X-ray"/>
    <property type="resolution" value="2.80 A"/>
    <property type="chains" value="F=1-165"/>
</dbReference>
<dbReference type="PDB" id="4L6V">
    <property type="method" value="X-ray"/>
    <property type="resolution" value="3.80 A"/>
    <property type="chains" value="6/F/f=84-165"/>
</dbReference>
<dbReference type="PDB" id="5OY0">
    <property type="method" value="X-ray"/>
    <property type="resolution" value="2.50 A"/>
    <property type="chains" value="6/F/f=23-165"/>
</dbReference>
<dbReference type="PDB" id="6HQB">
    <property type="method" value="X-ray"/>
    <property type="resolution" value="4.00 A"/>
    <property type="chains" value="F=23-165"/>
</dbReference>
<dbReference type="PDB" id="6NWA">
    <property type="method" value="EM"/>
    <property type="resolution" value="3.48 A"/>
    <property type="chains" value="F/Q/f=1-165"/>
</dbReference>
<dbReference type="PDB" id="6UZV">
    <property type="method" value="EM"/>
    <property type="resolution" value="3.10 A"/>
    <property type="chains" value="6/F/f=1-165"/>
</dbReference>
<dbReference type="PDB" id="7UMH">
    <property type="method" value="EM"/>
    <property type="resolution" value="2.60 A"/>
    <property type="chains" value="F/Q/f=1-165"/>
</dbReference>
<dbReference type="PDB" id="8AM5">
    <property type="method" value="EM"/>
    <property type="resolution" value="3.10 A"/>
    <property type="chains" value="f=1-165"/>
</dbReference>
<dbReference type="PDB" id="8ASL">
    <property type="method" value="EM"/>
    <property type="resolution" value="3.15 A"/>
    <property type="chains" value="f=1-165"/>
</dbReference>
<dbReference type="PDB" id="8ASP">
    <property type="method" value="EM"/>
    <property type="resolution" value="2.90 A"/>
    <property type="chains" value="f=1-165"/>
</dbReference>
<dbReference type="PDB" id="9AU4">
    <property type="method" value="EM"/>
    <property type="resolution" value="2.03 A"/>
    <property type="chains" value="F/Q/f=1-165"/>
</dbReference>
<dbReference type="PDBsum" id="4KT0"/>
<dbReference type="PDBsum" id="4L6V"/>
<dbReference type="PDBsum" id="5OY0"/>
<dbReference type="PDBsum" id="6HQB"/>
<dbReference type="PDBsum" id="6NWA"/>
<dbReference type="PDBsum" id="6UZV"/>
<dbReference type="PDBsum" id="7UMH"/>
<dbReference type="PDBsum" id="8AM5"/>
<dbReference type="PDBsum" id="8ASL"/>
<dbReference type="PDBsum" id="8ASP"/>
<dbReference type="PDBsum" id="9AU4"/>
<dbReference type="EMDB" id="EMD-0524"/>
<dbReference type="EMDB" id="EMD-15522"/>
<dbReference type="EMDB" id="EMD-15618"/>
<dbReference type="EMDB" id="EMD-15621"/>
<dbReference type="EMDB" id="EMD-20963"/>
<dbReference type="EMDB" id="EMD-26601"/>
<dbReference type="EMDB" id="EMD-43843"/>
<dbReference type="SMR" id="P29256"/>
<dbReference type="IntAct" id="P29256">
    <property type="interactions" value="9"/>
</dbReference>
<dbReference type="STRING" id="1148.gene:10498979"/>
<dbReference type="PaxDb" id="1148-1653192"/>
<dbReference type="EnsemblBacteria" id="BAA18108">
    <property type="protein sequence ID" value="BAA18108"/>
    <property type="gene ID" value="BAA18108"/>
</dbReference>
<dbReference type="KEGG" id="syn:sll0819"/>
<dbReference type="eggNOG" id="ENOG502ZBQN">
    <property type="taxonomic scope" value="Bacteria"/>
</dbReference>
<dbReference type="InParanoid" id="P29256"/>
<dbReference type="PhylomeDB" id="P29256"/>
<dbReference type="BioCyc" id="MetaCyc:PSAF-MONOMER"/>
<dbReference type="EvolutionaryTrace" id="P29256"/>
<dbReference type="Proteomes" id="UP000001425">
    <property type="component" value="Chromosome"/>
</dbReference>
<dbReference type="GO" id="GO:0009522">
    <property type="term" value="C:photosystem I"/>
    <property type="evidence" value="ECO:0000314"/>
    <property type="project" value="UniProtKB"/>
</dbReference>
<dbReference type="GO" id="GO:0009538">
    <property type="term" value="C:photosystem I reaction center"/>
    <property type="evidence" value="ECO:0007669"/>
    <property type="project" value="InterPro"/>
</dbReference>
<dbReference type="GO" id="GO:0005886">
    <property type="term" value="C:plasma membrane"/>
    <property type="evidence" value="ECO:0000314"/>
    <property type="project" value="UniProtKB"/>
</dbReference>
<dbReference type="GO" id="GO:0015979">
    <property type="term" value="P:photosynthesis"/>
    <property type="evidence" value="ECO:0007669"/>
    <property type="project" value="UniProtKB-KW"/>
</dbReference>
<dbReference type="FunFam" id="1.10.8.110:FF:000001">
    <property type="entry name" value="Photosystem I reaction center subunit III"/>
    <property type="match status" value="1"/>
</dbReference>
<dbReference type="Gene3D" id="1.10.8.110">
    <property type="entry name" value="Photosystem I PsaF, reaction centre subunit III"/>
    <property type="match status" value="1"/>
</dbReference>
<dbReference type="InterPro" id="IPR003666">
    <property type="entry name" value="PSI_PsaF"/>
</dbReference>
<dbReference type="InterPro" id="IPR036577">
    <property type="entry name" value="PSI_PsaF_sf"/>
</dbReference>
<dbReference type="PANTHER" id="PTHR34939">
    <property type="entry name" value="PHOTOSYSTEM I REACTION CENTER SUBUNIT III, CHLOROPLASTIC"/>
    <property type="match status" value="1"/>
</dbReference>
<dbReference type="PANTHER" id="PTHR34939:SF1">
    <property type="entry name" value="PHOTOSYSTEM I REACTION CENTER SUBUNIT III, CHLOROPLASTIC"/>
    <property type="match status" value="1"/>
</dbReference>
<dbReference type="Pfam" id="PF02507">
    <property type="entry name" value="PSI_PsaF"/>
    <property type="match status" value="1"/>
</dbReference>
<dbReference type="SUPFAM" id="SSF81536">
    <property type="entry name" value="Subunit III of photosystem I reaction centre, PsaF"/>
    <property type="match status" value="1"/>
</dbReference>
<feature type="signal peptide" evidence="1">
    <location>
        <begin position="1"/>
        <end position="23"/>
    </location>
</feature>
<feature type="chain" id="PRO_0000029355" description="Photosystem I reaction center subunit III">
    <location>
        <begin position="24"/>
        <end position="165"/>
    </location>
</feature>
<feature type="helix" evidence="3">
    <location>
        <begin position="32"/>
        <end position="34"/>
    </location>
</feature>
<feature type="helix" evidence="3">
    <location>
        <begin position="36"/>
        <end position="42"/>
    </location>
</feature>
<feature type="strand" evidence="4">
    <location>
        <begin position="48"/>
        <end position="51"/>
    </location>
</feature>
<feature type="helix" evidence="3">
    <location>
        <begin position="54"/>
        <end position="61"/>
    </location>
</feature>
<feature type="strand" evidence="3">
    <location>
        <begin position="64"/>
        <end position="67"/>
    </location>
</feature>
<feature type="strand" evidence="3">
    <location>
        <begin position="73"/>
        <end position="75"/>
    </location>
</feature>
<feature type="helix" evidence="3">
    <location>
        <begin position="81"/>
        <end position="83"/>
    </location>
</feature>
<feature type="turn" evidence="3">
    <location>
        <begin position="84"/>
        <end position="87"/>
    </location>
</feature>
<feature type="helix" evidence="3">
    <location>
        <begin position="88"/>
        <end position="112"/>
    </location>
</feature>
<feature type="helix" evidence="3">
    <location>
        <begin position="118"/>
        <end position="123"/>
    </location>
</feature>
<feature type="helix" evidence="3">
    <location>
        <begin position="127"/>
        <end position="135"/>
    </location>
</feature>
<feature type="turn" evidence="3">
    <location>
        <begin position="136"/>
        <end position="139"/>
    </location>
</feature>
<feature type="helix" evidence="3">
    <location>
        <begin position="140"/>
        <end position="150"/>
    </location>
</feature>
<feature type="strand" evidence="3">
    <location>
        <begin position="151"/>
        <end position="154"/>
    </location>
</feature>
<feature type="helix" evidence="3">
    <location>
        <begin position="157"/>
        <end position="159"/>
    </location>
</feature>
<reference key="1">
    <citation type="journal article" date="1991" name="J. Biol. Chem.">
        <title>Molecular cloning and targeted mutagenesis of the gene psaF encoding subunit III of photosystem I from the cyanobacterium Synechocystis sp. PCC 6803.</title>
        <authorList>
            <person name="Chitnis P.R."/>
            <person name="Purvis D."/>
            <person name="Nelson N."/>
        </authorList>
    </citation>
    <scope>NUCLEOTIDE SEQUENCE [GENOMIC DNA]</scope>
</reference>
<reference key="2">
    <citation type="journal article" date="1994" name="J. Biol. Chem.">
        <title>Function and organization of photosystem I in a cyanobacterial mutant strain that lacks PsaF and PsaJ subunits.</title>
        <authorList>
            <person name="Xu Q."/>
            <person name="Yu L."/>
            <person name="Chitnis V.P."/>
            <person name="Chitnis P.R."/>
        </authorList>
    </citation>
    <scope>NUCLEOTIDE SEQUENCE [GENOMIC DNA]</scope>
</reference>
<reference key="3">
    <citation type="journal article" date="1996" name="DNA Res.">
        <title>Sequence analysis of the genome of the unicellular cyanobacterium Synechocystis sp. strain PCC6803. II. Sequence determination of the entire genome and assignment of potential protein-coding regions.</title>
        <authorList>
            <person name="Kaneko T."/>
            <person name="Sato S."/>
            <person name="Kotani H."/>
            <person name="Tanaka A."/>
            <person name="Asamizu E."/>
            <person name="Nakamura Y."/>
            <person name="Miyajima N."/>
            <person name="Hirosawa M."/>
            <person name="Sugiura M."/>
            <person name="Sasamoto S."/>
            <person name="Kimura T."/>
            <person name="Hosouchi T."/>
            <person name="Matsuno A."/>
            <person name="Muraki A."/>
            <person name="Nakazaki N."/>
            <person name="Naruo K."/>
            <person name="Okumura S."/>
            <person name="Shimpo S."/>
            <person name="Takeuchi C."/>
            <person name="Wada T."/>
            <person name="Watanabe A."/>
            <person name="Yamada M."/>
            <person name="Yasuda M."/>
            <person name="Tabata S."/>
        </authorList>
    </citation>
    <scope>NUCLEOTIDE SEQUENCE [LARGE SCALE GENOMIC DNA]</scope>
    <source>
        <strain>ATCC 27184 / PCC 6803 / Kazusa</strain>
    </source>
</reference>
<reference key="4">
    <citation type="journal article" date="1995" name="Eur. J. Biochem.">
        <title>Pigment-protein complexes from the photosynthetic membrane of the cyanobacterium Synechocystis sp. PCC 6803.</title>
        <authorList>
            <person name="Barbato R."/>
            <person name="Polverino De Laureto P."/>
            <person name="Rigoni F."/>
            <person name="De Martini E."/>
            <person name="Giacometti G.M."/>
        </authorList>
    </citation>
    <scope>PROTEIN SEQUENCE OF 24-35</scope>
</reference>
<keyword id="KW-0002">3D-structure</keyword>
<keyword id="KW-0903">Direct protein sequencing</keyword>
<keyword id="KW-0602">Photosynthesis</keyword>
<keyword id="KW-0603">Photosystem I</keyword>
<keyword id="KW-1185">Reference proteome</keyword>
<keyword id="KW-0732">Signal</keyword>
<evidence type="ECO:0000250" key="1"/>
<evidence type="ECO:0000305" key="2"/>
<evidence type="ECO:0007829" key="3">
    <source>
        <dbReference type="PDB" id="5OY0"/>
    </source>
</evidence>
<evidence type="ECO:0007829" key="4">
    <source>
        <dbReference type="PDB" id="8ASP"/>
    </source>
</evidence>
<protein>
    <recommendedName>
        <fullName>Photosystem I reaction center subunit III</fullName>
    </recommendedName>
    <alternativeName>
        <fullName>PSI-F</fullName>
    </alternativeName>
</protein>
<gene>
    <name type="primary">psaF</name>
    <name type="ordered locus">sll0819</name>
</gene>
<organism>
    <name type="scientific">Synechocystis sp. (strain ATCC 27184 / PCC 6803 / Kazusa)</name>
    <dbReference type="NCBI Taxonomy" id="1111708"/>
    <lineage>
        <taxon>Bacteria</taxon>
        <taxon>Bacillati</taxon>
        <taxon>Cyanobacteriota</taxon>
        <taxon>Cyanophyceae</taxon>
        <taxon>Synechococcales</taxon>
        <taxon>Merismopediaceae</taxon>
        <taxon>Synechocystis</taxon>
    </lineage>
</organism>
<comment type="function">
    <text>Probably participates in efficiency of electron transfer from plastocyanin to P700 (or cytochrome c553 in algae and cyanobacteria). This plastocyanin-docking protein contributes to the specific association of plastocyanin to PSI.</text>
</comment>
<comment type="similarity">
    <text evidence="2">Belongs to the PsaF family.</text>
</comment>
<name>PSAF_SYNY3</name>
<sequence>MKHLLALLLAFTLWFNFAPSASADDFANLTPCSENPAYLAKSKNFLNTTNDPNSGKIRAERYASALCGPEGYPHLIVDGRFTHAGDFLIPSILFLYIAGWIGWVGRSYLIEIRESKNPEMQEVVINVPLAIKKMLGGFLWPLAAVGEYTSGKLVMKDSEIPTSPR</sequence>
<proteinExistence type="evidence at protein level"/>
<accession>P29256</accession>